<organism>
    <name type="scientific">Cupriavidus necator (strain ATCC 17699 / DSM 428 / KCTC 22496 / NCIMB 10442 / H16 / Stanier 337)</name>
    <name type="common">Ralstonia eutropha</name>
    <dbReference type="NCBI Taxonomy" id="381666"/>
    <lineage>
        <taxon>Bacteria</taxon>
        <taxon>Pseudomonadati</taxon>
        <taxon>Pseudomonadota</taxon>
        <taxon>Betaproteobacteria</taxon>
        <taxon>Burkholderiales</taxon>
        <taxon>Burkholderiaceae</taxon>
        <taxon>Cupriavidus</taxon>
    </lineage>
</organism>
<name>MSCL_CUPNH</name>
<comment type="function">
    <text evidence="1">Channel that opens in response to stretch forces in the membrane lipid bilayer. May participate in the regulation of osmotic pressure changes within the cell.</text>
</comment>
<comment type="subunit">
    <text evidence="1">Homopentamer.</text>
</comment>
<comment type="subcellular location">
    <subcellularLocation>
        <location evidence="1">Cell inner membrane</location>
        <topology evidence="1">Multi-pass membrane protein</topology>
    </subcellularLocation>
</comment>
<comment type="similarity">
    <text evidence="1">Belongs to the MscL family.</text>
</comment>
<evidence type="ECO:0000255" key="1">
    <source>
        <dbReference type="HAMAP-Rule" id="MF_00115"/>
    </source>
</evidence>
<proteinExistence type="inferred from homology"/>
<feature type="chain" id="PRO_1000015412" description="Large-conductance mechanosensitive channel">
    <location>
        <begin position="1"/>
        <end position="141"/>
    </location>
</feature>
<feature type="transmembrane region" description="Helical" evidence="1">
    <location>
        <begin position="16"/>
        <end position="36"/>
    </location>
</feature>
<feature type="transmembrane region" description="Helical" evidence="1">
    <location>
        <begin position="40"/>
        <end position="60"/>
    </location>
</feature>
<feature type="transmembrane region" description="Helical" evidence="1">
    <location>
        <begin position="86"/>
        <end position="106"/>
    </location>
</feature>
<reference key="1">
    <citation type="journal article" date="2006" name="Nat. Biotechnol.">
        <title>Genome sequence of the bioplastic-producing 'Knallgas' bacterium Ralstonia eutropha H16.</title>
        <authorList>
            <person name="Pohlmann A."/>
            <person name="Fricke W.F."/>
            <person name="Reinecke F."/>
            <person name="Kusian B."/>
            <person name="Liesegang H."/>
            <person name="Cramm R."/>
            <person name="Eitinger T."/>
            <person name="Ewering C."/>
            <person name="Poetter M."/>
            <person name="Schwartz E."/>
            <person name="Strittmatter A."/>
            <person name="Voss I."/>
            <person name="Gottschalk G."/>
            <person name="Steinbuechel A."/>
            <person name="Friedrich B."/>
            <person name="Bowien B."/>
        </authorList>
    </citation>
    <scope>NUCLEOTIDE SEQUENCE [LARGE SCALE GENOMIC DNA]</scope>
    <source>
        <strain>ATCC 17699 / DSM 428 / KCTC 22496 / NCIMB 10442 / H16 / Stanier 337</strain>
    </source>
</reference>
<sequence length="141" mass="15246">MGMISEFRTFAVRGNVIDLAVGVIIGAAFGKIVDSVVNDLIMPLVGRVIGKLDFSSMFIVLADPPPGTPTTLDALKKAGVPVFAYGNFLTIVVNFLILAFIIFLMVRAFNRMRAAEPEAAPAAPPEEVVLLREIRDSLKTR</sequence>
<keyword id="KW-0997">Cell inner membrane</keyword>
<keyword id="KW-1003">Cell membrane</keyword>
<keyword id="KW-0407">Ion channel</keyword>
<keyword id="KW-0406">Ion transport</keyword>
<keyword id="KW-0472">Membrane</keyword>
<keyword id="KW-1185">Reference proteome</keyword>
<keyword id="KW-0812">Transmembrane</keyword>
<keyword id="KW-1133">Transmembrane helix</keyword>
<keyword id="KW-0813">Transport</keyword>
<gene>
    <name evidence="1" type="primary">mscL</name>
    <name type="ordered locus">H16_A3399</name>
</gene>
<protein>
    <recommendedName>
        <fullName evidence="1">Large-conductance mechanosensitive channel</fullName>
    </recommendedName>
</protein>
<accession>Q0K6A4</accession>
<dbReference type="EMBL" id="AM260479">
    <property type="protein sequence ID" value="CAJ94467.1"/>
    <property type="molecule type" value="Genomic_DNA"/>
</dbReference>
<dbReference type="RefSeq" id="WP_010812315.1">
    <property type="nucleotide sequence ID" value="NZ_CP039287.1"/>
</dbReference>
<dbReference type="SMR" id="Q0K6A4"/>
<dbReference type="STRING" id="381666.H16_A3399"/>
<dbReference type="GeneID" id="34311251"/>
<dbReference type="KEGG" id="reh:H16_A3399"/>
<dbReference type="eggNOG" id="COG1970">
    <property type="taxonomic scope" value="Bacteria"/>
</dbReference>
<dbReference type="HOGENOM" id="CLU_095787_0_1_4"/>
<dbReference type="OrthoDB" id="9810350at2"/>
<dbReference type="Proteomes" id="UP000008210">
    <property type="component" value="Chromosome 1"/>
</dbReference>
<dbReference type="GO" id="GO:0005886">
    <property type="term" value="C:plasma membrane"/>
    <property type="evidence" value="ECO:0007669"/>
    <property type="project" value="UniProtKB-SubCell"/>
</dbReference>
<dbReference type="GO" id="GO:0008381">
    <property type="term" value="F:mechanosensitive monoatomic ion channel activity"/>
    <property type="evidence" value="ECO:0007669"/>
    <property type="project" value="UniProtKB-UniRule"/>
</dbReference>
<dbReference type="Gene3D" id="1.10.1200.120">
    <property type="entry name" value="Large-conductance mechanosensitive channel, MscL, domain 1"/>
    <property type="match status" value="1"/>
</dbReference>
<dbReference type="HAMAP" id="MF_00115">
    <property type="entry name" value="MscL"/>
    <property type="match status" value="1"/>
</dbReference>
<dbReference type="InterPro" id="IPR019823">
    <property type="entry name" value="Mechanosensitive_channel_CS"/>
</dbReference>
<dbReference type="InterPro" id="IPR001185">
    <property type="entry name" value="MS_channel"/>
</dbReference>
<dbReference type="InterPro" id="IPR037673">
    <property type="entry name" value="MSC/AndL"/>
</dbReference>
<dbReference type="InterPro" id="IPR036019">
    <property type="entry name" value="MscL_channel"/>
</dbReference>
<dbReference type="NCBIfam" id="TIGR00220">
    <property type="entry name" value="mscL"/>
    <property type="match status" value="1"/>
</dbReference>
<dbReference type="NCBIfam" id="NF001843">
    <property type="entry name" value="PRK00567.1-4"/>
    <property type="match status" value="1"/>
</dbReference>
<dbReference type="NCBIfam" id="NF010557">
    <property type="entry name" value="PRK13952.1"/>
    <property type="match status" value="1"/>
</dbReference>
<dbReference type="PANTHER" id="PTHR30266:SF2">
    <property type="entry name" value="LARGE-CONDUCTANCE MECHANOSENSITIVE CHANNEL"/>
    <property type="match status" value="1"/>
</dbReference>
<dbReference type="PANTHER" id="PTHR30266">
    <property type="entry name" value="MECHANOSENSITIVE CHANNEL MSCL"/>
    <property type="match status" value="1"/>
</dbReference>
<dbReference type="Pfam" id="PF01741">
    <property type="entry name" value="MscL"/>
    <property type="match status" value="1"/>
</dbReference>
<dbReference type="PRINTS" id="PR01264">
    <property type="entry name" value="MECHCHANNEL"/>
</dbReference>
<dbReference type="SUPFAM" id="SSF81330">
    <property type="entry name" value="Gated mechanosensitive channel"/>
    <property type="match status" value="1"/>
</dbReference>
<dbReference type="PROSITE" id="PS01327">
    <property type="entry name" value="MSCL"/>
    <property type="match status" value="1"/>
</dbReference>